<proteinExistence type="evidence at protein level"/>
<keyword id="KW-0007">Acetylation</keyword>
<keyword id="KW-0113">Calvin cycle</keyword>
<keyword id="KW-0120">Carbon dioxide fixation</keyword>
<keyword id="KW-0150">Chloroplast</keyword>
<keyword id="KW-0903">Direct protein sequencing</keyword>
<keyword id="KW-1015">Disulfide bond</keyword>
<keyword id="KW-0456">Lyase</keyword>
<keyword id="KW-0460">Magnesium</keyword>
<keyword id="KW-0479">Metal-binding</keyword>
<keyword id="KW-0488">Methylation</keyword>
<keyword id="KW-0503">Monooxygenase</keyword>
<keyword id="KW-0560">Oxidoreductase</keyword>
<keyword id="KW-0601">Photorespiration</keyword>
<keyword id="KW-0602">Photosynthesis</keyword>
<keyword id="KW-0934">Plastid</keyword>
<reference key="1">
    <citation type="journal article" date="2006" name="Plant Cell Rep.">
        <title>Complete sequence and organization of the cucumber (Cucumis sativus L. cv. Baekmibaekdadagi) chloroplast genome.</title>
        <authorList>
            <person name="Kim J.-S."/>
            <person name="Jung J.D."/>
            <person name="Lee J.-A."/>
            <person name="Park H.-W."/>
            <person name="Oh K.-H."/>
            <person name="Jeong W.J."/>
            <person name="Choi D.-W."/>
            <person name="Liu J.R."/>
            <person name="Cho K.Y."/>
        </authorList>
    </citation>
    <scope>NUCLEOTIDE SEQUENCE [LARGE SCALE GENOMIC DNA]</scope>
    <source>
        <strain>cv. Baekmibaekdadagi</strain>
    </source>
</reference>
<reference key="2">
    <citation type="journal article" date="2007" name="Cell. Mol. Biol. Lett.">
        <title>The complete structure of the cucumber (Cucumis sativus L.) chloroplast genome: its composition and comparative analysis.</title>
        <authorList>
            <person name="Plader W.W."/>
            <person name="Yukawa Y."/>
            <person name="Sugiura M."/>
            <person name="Malepszy S."/>
        </authorList>
    </citation>
    <scope>NUCLEOTIDE SEQUENCE [LARGE SCALE GENOMIC DNA]</scope>
    <source>
        <strain>cv. Borszczagowski</strain>
    </source>
</reference>
<reference key="3">
    <citation type="journal article" date="2007" name="Genome">
        <title>Sequencing cucumber (Cucumis sativus L.) chloroplast genomes identifies differences between chilling-tolerant and -susceptible cucumber lines.</title>
        <authorList>
            <person name="Chung S.-M."/>
            <person name="Gordon V.S."/>
            <person name="Staub J.E."/>
        </authorList>
    </citation>
    <scope>NUCLEOTIDE SEQUENCE [LARGE SCALE GENOMIC DNA]</scope>
    <source>
        <strain>cv. Chipper</strain>
        <strain>cv. Gy14</strain>
    </source>
</reference>
<reference key="4">
    <citation type="journal article" date="1992" name="Plant Physiol.">
        <title>Posttranslational modifications in the amino-terminal region of the large subunit of ribulose-1,5-bisphosphate carboxylase/oxygenase from several plant species.</title>
        <authorList>
            <person name="Houtz R.L."/>
            <person name="Poneleit L."/>
            <person name="Jones S.B."/>
            <person name="Royer M."/>
            <person name="Stults J.T."/>
        </authorList>
    </citation>
    <scope>PROTEIN SEQUENCE OF 3-18</scope>
    <scope>METHYLATION AT LYS-14</scope>
    <scope>ACETYLATION AT PRO-3</scope>
</reference>
<reference key="5">
    <citation type="journal article" date="1994" name="Syst. Bot.">
        <title>Phylogenetic affinites of Datiscaceae based on an analysis of nucleotide sequences from the plastid rbcL gene.</title>
        <authorList>
            <person name="Swensen S.M."/>
            <person name="Mullin B.C."/>
            <person name="Chase M.W."/>
        </authorList>
        <dbReference type="AGRICOLA" id="IND20396219"/>
    </citation>
    <scope>NUCLEOTIDE SEQUENCE [GENOMIC DNA] OF 8-473</scope>
</reference>
<reference key="6">
    <citation type="submission" date="1999-11" db="EMBL/GenBank/DDBJ databases">
        <title>Angiosperm phylogeny inferred from multiple genes as a tool for comparative biology.</title>
        <authorList>
            <person name="Soltis P.S."/>
            <person name="Soltis D.E."/>
            <person name="Chase M.W."/>
        </authorList>
    </citation>
    <scope>NUCLEOTIDE SEQUENCE [GENOMIC DNA] OF 8-473</scope>
</reference>
<accession>P27064</accession>
<accession>A5J1U2</accession>
<accession>Q2QD81</accession>
<accession>Q32077</accession>
<accession>Q4VZI4</accession>
<organism>
    <name type="scientific">Cucumis sativus</name>
    <name type="common">Cucumber</name>
    <dbReference type="NCBI Taxonomy" id="3659"/>
    <lineage>
        <taxon>Eukaryota</taxon>
        <taxon>Viridiplantae</taxon>
        <taxon>Streptophyta</taxon>
        <taxon>Embryophyta</taxon>
        <taxon>Tracheophyta</taxon>
        <taxon>Spermatophyta</taxon>
        <taxon>Magnoliopsida</taxon>
        <taxon>eudicotyledons</taxon>
        <taxon>Gunneridae</taxon>
        <taxon>Pentapetalae</taxon>
        <taxon>rosids</taxon>
        <taxon>fabids</taxon>
        <taxon>Cucurbitales</taxon>
        <taxon>Cucurbitaceae</taxon>
        <taxon>Benincaseae</taxon>
        <taxon>Cucumis</taxon>
    </lineage>
</organism>
<gene>
    <name type="primary">rbcL</name>
    <name type="ordered locus">CsCp048</name>
</gene>
<dbReference type="EC" id="4.1.1.39"/>
<dbReference type="EMBL" id="DQ119058">
    <property type="protein sequence ID" value="AAZ94659.1"/>
    <property type="status" value="ALT_INIT"/>
    <property type="molecule type" value="Genomic_DNA"/>
</dbReference>
<dbReference type="EMBL" id="AJ970307">
    <property type="protein sequence ID" value="CAJ00766.1"/>
    <property type="molecule type" value="Genomic_DNA"/>
</dbReference>
<dbReference type="EMBL" id="DQ865975">
    <property type="protein sequence ID" value="ABI97425.1"/>
    <property type="molecule type" value="Genomic_DNA"/>
</dbReference>
<dbReference type="EMBL" id="DQ865976">
    <property type="protein sequence ID" value="ABI98753.1"/>
    <property type="molecule type" value="Genomic_DNA"/>
</dbReference>
<dbReference type="EMBL" id="L21937">
    <property type="protein sequence ID" value="AAA84187.1"/>
    <property type="molecule type" value="Genomic_DNA"/>
</dbReference>
<dbReference type="EMBL" id="AF206755">
    <property type="protein sequence ID" value="AAL35646.1"/>
    <property type="molecule type" value="Genomic_DNA"/>
</dbReference>
<dbReference type="RefSeq" id="YP_247607.1">
    <property type="nucleotide sequence ID" value="NC_007144.1"/>
</dbReference>
<dbReference type="SMR" id="P27064"/>
<dbReference type="iPTMnet" id="P27064"/>
<dbReference type="GeneID" id="3429289"/>
<dbReference type="KEGG" id="csv:3429289"/>
<dbReference type="eggNOG" id="ENOG502QTI9">
    <property type="taxonomic scope" value="Eukaryota"/>
</dbReference>
<dbReference type="OrthoDB" id="563909at2759"/>
<dbReference type="GO" id="GO:0009507">
    <property type="term" value="C:chloroplast"/>
    <property type="evidence" value="ECO:0007669"/>
    <property type="project" value="UniProtKB-SubCell"/>
</dbReference>
<dbReference type="GO" id="GO:0000287">
    <property type="term" value="F:magnesium ion binding"/>
    <property type="evidence" value="ECO:0007669"/>
    <property type="project" value="UniProtKB-UniRule"/>
</dbReference>
<dbReference type="GO" id="GO:0004497">
    <property type="term" value="F:monooxygenase activity"/>
    <property type="evidence" value="ECO:0007669"/>
    <property type="project" value="UniProtKB-KW"/>
</dbReference>
<dbReference type="GO" id="GO:0016984">
    <property type="term" value="F:ribulose-bisphosphate carboxylase activity"/>
    <property type="evidence" value="ECO:0007669"/>
    <property type="project" value="UniProtKB-UniRule"/>
</dbReference>
<dbReference type="GO" id="GO:0009853">
    <property type="term" value="P:photorespiration"/>
    <property type="evidence" value="ECO:0007669"/>
    <property type="project" value="UniProtKB-KW"/>
</dbReference>
<dbReference type="GO" id="GO:0019253">
    <property type="term" value="P:reductive pentose-phosphate cycle"/>
    <property type="evidence" value="ECO:0007669"/>
    <property type="project" value="UniProtKB-UniRule"/>
</dbReference>
<dbReference type="CDD" id="cd08212">
    <property type="entry name" value="RuBisCO_large_I"/>
    <property type="match status" value="1"/>
</dbReference>
<dbReference type="FunFam" id="3.20.20.110:FF:000001">
    <property type="entry name" value="Ribulose bisphosphate carboxylase large chain"/>
    <property type="match status" value="1"/>
</dbReference>
<dbReference type="FunFam" id="3.30.70.150:FF:000001">
    <property type="entry name" value="Ribulose bisphosphate carboxylase large chain"/>
    <property type="match status" value="1"/>
</dbReference>
<dbReference type="Gene3D" id="3.20.20.110">
    <property type="entry name" value="Ribulose bisphosphate carboxylase, large subunit, C-terminal domain"/>
    <property type="match status" value="1"/>
</dbReference>
<dbReference type="Gene3D" id="3.30.70.150">
    <property type="entry name" value="RuBisCO large subunit, N-terminal domain"/>
    <property type="match status" value="1"/>
</dbReference>
<dbReference type="HAMAP" id="MF_01338">
    <property type="entry name" value="RuBisCO_L_type1"/>
    <property type="match status" value="1"/>
</dbReference>
<dbReference type="InterPro" id="IPR033966">
    <property type="entry name" value="RuBisCO"/>
</dbReference>
<dbReference type="InterPro" id="IPR020878">
    <property type="entry name" value="RuBisCo_large_chain_AS"/>
</dbReference>
<dbReference type="InterPro" id="IPR000685">
    <property type="entry name" value="RuBisCO_lsu_C"/>
</dbReference>
<dbReference type="InterPro" id="IPR036376">
    <property type="entry name" value="RuBisCO_lsu_C_sf"/>
</dbReference>
<dbReference type="InterPro" id="IPR017443">
    <property type="entry name" value="RuBisCO_lsu_fd_N"/>
</dbReference>
<dbReference type="InterPro" id="IPR036422">
    <property type="entry name" value="RuBisCO_lsu_N_sf"/>
</dbReference>
<dbReference type="InterPro" id="IPR020888">
    <property type="entry name" value="RuBisCO_lsuI"/>
</dbReference>
<dbReference type="NCBIfam" id="NF003252">
    <property type="entry name" value="PRK04208.1"/>
    <property type="match status" value="1"/>
</dbReference>
<dbReference type="PANTHER" id="PTHR42704">
    <property type="entry name" value="RIBULOSE BISPHOSPHATE CARBOXYLASE"/>
    <property type="match status" value="1"/>
</dbReference>
<dbReference type="PANTHER" id="PTHR42704:SF16">
    <property type="entry name" value="RIBULOSE BISPHOSPHATE CARBOXYLASE LARGE CHAIN"/>
    <property type="match status" value="1"/>
</dbReference>
<dbReference type="Pfam" id="PF00016">
    <property type="entry name" value="RuBisCO_large"/>
    <property type="match status" value="1"/>
</dbReference>
<dbReference type="Pfam" id="PF02788">
    <property type="entry name" value="RuBisCO_large_N"/>
    <property type="match status" value="1"/>
</dbReference>
<dbReference type="SFLD" id="SFLDG01052">
    <property type="entry name" value="RuBisCO"/>
    <property type="match status" value="1"/>
</dbReference>
<dbReference type="SFLD" id="SFLDS00014">
    <property type="entry name" value="RuBisCO"/>
    <property type="match status" value="1"/>
</dbReference>
<dbReference type="SFLD" id="SFLDG00301">
    <property type="entry name" value="RuBisCO-like_proteins"/>
    <property type="match status" value="1"/>
</dbReference>
<dbReference type="SUPFAM" id="SSF51649">
    <property type="entry name" value="RuBisCo, C-terminal domain"/>
    <property type="match status" value="1"/>
</dbReference>
<dbReference type="SUPFAM" id="SSF54966">
    <property type="entry name" value="RuBisCO, large subunit, small (N-terminal) domain"/>
    <property type="match status" value="1"/>
</dbReference>
<dbReference type="PROSITE" id="PS00157">
    <property type="entry name" value="RUBISCO_LARGE"/>
    <property type="match status" value="1"/>
</dbReference>
<evidence type="ECO:0000250" key="1"/>
<evidence type="ECO:0000269" key="2">
    <source>
    </source>
</evidence>
<evidence type="ECO:0000305" key="3"/>
<sequence length="475" mass="52642">MSPQTETKASVGFKAGVKDYKLTYYTPEYETKDTDILAAFRVTPQPGVPPEEAGAAVAAESSTGTWTTVWTDGLTSLDRYKGRCYGIEPVAGEENQYIAYVAYPLDLFEEGSVTNMFTSIVGNVFGFKALRALRLEDLRIPTAYIKTFQGPPHGIQVERDKLNKYGRPLLGCTIKPKLGLSAKNYGRAVYECLRGGLDFTKDDENVNSQPFMRWRDRFLFCAEAIFKSQAETGEIKGHYLNATAGTCEEMMKRAIFARELGAPIVMHDYLTGGFTANTSLAHYCRDNGLLLHIHRAMHAVIDRQKNHGMHFRVLAKALRMSGGDHIHAGTVVGKLEGEREITLGFVDLLRDDFVEKDRSRGIYFTQDWVSLPGVLPVASGGIHVWHMPALTEIFGDDSVLQFGGGTLGHPWGNAPGAVANRVALEACVQARNEGRDLAREGNEIIREASKWSPELAAACEVWKEIKFEFEAMDTL</sequence>
<name>RBL_CUCSA</name>
<comment type="function">
    <text>RuBisCO catalyzes two reactions: the carboxylation of D-ribulose 1,5-bisphosphate, the primary event in carbon dioxide fixation, as well as the oxidative fragmentation of the pentose substrate in the photorespiration process. Both reactions occur simultaneously and in competition at the same active site.</text>
</comment>
<comment type="catalytic activity">
    <reaction>
        <text>2 (2R)-3-phosphoglycerate + 2 H(+) = D-ribulose 1,5-bisphosphate + CO2 + H2O</text>
        <dbReference type="Rhea" id="RHEA:23124"/>
        <dbReference type="ChEBI" id="CHEBI:15377"/>
        <dbReference type="ChEBI" id="CHEBI:15378"/>
        <dbReference type="ChEBI" id="CHEBI:16526"/>
        <dbReference type="ChEBI" id="CHEBI:57870"/>
        <dbReference type="ChEBI" id="CHEBI:58272"/>
        <dbReference type="EC" id="4.1.1.39"/>
    </reaction>
</comment>
<comment type="catalytic activity">
    <reaction>
        <text>D-ribulose 1,5-bisphosphate + O2 = 2-phosphoglycolate + (2R)-3-phosphoglycerate + 2 H(+)</text>
        <dbReference type="Rhea" id="RHEA:36631"/>
        <dbReference type="ChEBI" id="CHEBI:15378"/>
        <dbReference type="ChEBI" id="CHEBI:15379"/>
        <dbReference type="ChEBI" id="CHEBI:57870"/>
        <dbReference type="ChEBI" id="CHEBI:58033"/>
        <dbReference type="ChEBI" id="CHEBI:58272"/>
    </reaction>
</comment>
<comment type="cofactor">
    <cofactor evidence="1">
        <name>Mg(2+)</name>
        <dbReference type="ChEBI" id="CHEBI:18420"/>
    </cofactor>
    <text evidence="1">Binds 1 Mg(2+) ion per subunit.</text>
</comment>
<comment type="subunit">
    <text evidence="1">Heterohexadecamer of 8 large chains and 8 small chains; disulfide-linked. The disulfide link is formed within the large subunit homodimers (By similarity).</text>
</comment>
<comment type="subcellular location">
    <subcellularLocation>
        <location>Plastid</location>
        <location>Chloroplast</location>
    </subcellularLocation>
</comment>
<comment type="PTM">
    <text evidence="1">The disulfide bond which can form in the large chain dimeric partners within the hexadecamer appears to be associated with oxidative stress and protein turnover.</text>
</comment>
<comment type="miscellaneous">
    <text evidence="1">The basic functional RuBisCO is composed of a large chain homodimer in a 'head-to-tail' conformation. In form I RuBisCO this homodimer is arranged in a barrel-like tetramer with the small subunits forming a tetrameric 'cap' on each end of the 'barrel' (By similarity).</text>
</comment>
<comment type="similarity">
    <text evidence="3">Belongs to the RuBisCO large chain family. Type I subfamily.</text>
</comment>
<comment type="sequence caution" evidence="3">
    <conflict type="erroneous initiation">
        <sequence resource="EMBL-CDS" id="AAZ94659"/>
    </conflict>
</comment>
<protein>
    <recommendedName>
        <fullName>Ribulose bisphosphate carboxylase large chain</fullName>
        <shortName>RuBisCO large subunit</shortName>
        <ecNumber>4.1.1.39</ecNumber>
    </recommendedName>
</protein>
<geneLocation type="chloroplast"/>
<feature type="propeptide" id="PRO_0000031195" evidence="2">
    <location>
        <begin position="1"/>
        <end position="2"/>
    </location>
</feature>
<feature type="chain" id="PRO_0000031196" description="Ribulose bisphosphate carboxylase large chain">
    <location>
        <begin position="3"/>
        <end position="475"/>
    </location>
</feature>
<feature type="active site" description="Proton acceptor" evidence="1">
    <location>
        <position position="175"/>
    </location>
</feature>
<feature type="active site" description="Proton acceptor" evidence="1">
    <location>
        <position position="294"/>
    </location>
</feature>
<feature type="binding site" description="in homodimeric partner" evidence="1">
    <location>
        <position position="123"/>
    </location>
    <ligand>
        <name>substrate</name>
    </ligand>
</feature>
<feature type="binding site" evidence="1">
    <location>
        <position position="173"/>
    </location>
    <ligand>
        <name>substrate</name>
    </ligand>
</feature>
<feature type="binding site" evidence="1">
    <location>
        <position position="177"/>
    </location>
    <ligand>
        <name>substrate</name>
    </ligand>
</feature>
<feature type="binding site" description="via carbamate group" evidence="1">
    <location>
        <position position="201"/>
    </location>
    <ligand>
        <name>Mg(2+)</name>
        <dbReference type="ChEBI" id="CHEBI:18420"/>
    </ligand>
</feature>
<feature type="binding site" evidence="1">
    <location>
        <position position="203"/>
    </location>
    <ligand>
        <name>Mg(2+)</name>
        <dbReference type="ChEBI" id="CHEBI:18420"/>
    </ligand>
</feature>
<feature type="binding site" evidence="1">
    <location>
        <position position="204"/>
    </location>
    <ligand>
        <name>Mg(2+)</name>
        <dbReference type="ChEBI" id="CHEBI:18420"/>
    </ligand>
</feature>
<feature type="binding site" evidence="1">
    <location>
        <position position="295"/>
    </location>
    <ligand>
        <name>substrate</name>
    </ligand>
</feature>
<feature type="binding site" evidence="1">
    <location>
        <position position="327"/>
    </location>
    <ligand>
        <name>substrate</name>
    </ligand>
</feature>
<feature type="binding site" evidence="1">
    <location>
        <position position="379"/>
    </location>
    <ligand>
        <name>substrate</name>
    </ligand>
</feature>
<feature type="site" description="Transition state stabilizer" evidence="1">
    <location>
        <position position="334"/>
    </location>
</feature>
<feature type="modified residue" description="N-acetylproline" evidence="2">
    <location>
        <position position="3"/>
    </location>
</feature>
<feature type="modified residue" description="N6,N6,N6-trimethyllysine" evidence="2">
    <location>
        <position position="14"/>
    </location>
</feature>
<feature type="modified residue" description="N6-carboxylysine" evidence="1">
    <location>
        <position position="201"/>
    </location>
</feature>
<feature type="disulfide bond" description="Interchain; in linked form" evidence="1">
    <location>
        <position position="247"/>
    </location>
</feature>
<feature type="sequence conflict" description="In Ref. 5; AAA84187 and 6; AAL35646." evidence="3" ref="5 6">
    <original>F</original>
    <variation>V</variation>
    <location>
        <position position="117"/>
    </location>
</feature>
<feature type="sequence conflict" description="In Ref. 2; CAJ00766." evidence="3" ref="2">
    <original>GHY</original>
    <variation>DI</variation>
    <location>
        <begin position="237"/>
        <end position="239"/>
    </location>
</feature>
<feature type="sequence conflict" description="In Ref. 2; CAJ00766." evidence="3" ref="2">
    <original>AAACEVW</original>
    <variation>VCVTWRKYG</variation>
    <location>
        <begin position="456"/>
        <end position="462"/>
    </location>
</feature>